<evidence type="ECO:0000255" key="1">
    <source>
        <dbReference type="HAMAP-Rule" id="MF_01345"/>
    </source>
</evidence>
<evidence type="ECO:0000305" key="2"/>
<dbReference type="EMBL" id="AE008384">
    <property type="protein sequence ID" value="AAM31829.1"/>
    <property type="status" value="ALT_INIT"/>
    <property type="molecule type" value="Genomic_DNA"/>
</dbReference>
<dbReference type="RefSeq" id="WP_011034064.1">
    <property type="nucleotide sequence ID" value="NC_003901.1"/>
</dbReference>
<dbReference type="SMR" id="Q8PV41"/>
<dbReference type="KEGG" id="mma:MM_2133"/>
<dbReference type="PATRIC" id="fig|192952.21.peg.2447"/>
<dbReference type="eggNOG" id="arCOG04096">
    <property type="taxonomic scope" value="Archaea"/>
</dbReference>
<dbReference type="HOGENOM" id="CLU_1682716_0_0_2"/>
<dbReference type="Proteomes" id="UP000000595">
    <property type="component" value="Chromosome"/>
</dbReference>
<dbReference type="GO" id="GO:0022627">
    <property type="term" value="C:cytosolic small ribosomal subunit"/>
    <property type="evidence" value="ECO:0007669"/>
    <property type="project" value="TreeGrafter"/>
</dbReference>
<dbReference type="GO" id="GO:0019843">
    <property type="term" value="F:rRNA binding"/>
    <property type="evidence" value="ECO:0007669"/>
    <property type="project" value="UniProtKB-UniRule"/>
</dbReference>
<dbReference type="GO" id="GO:0003735">
    <property type="term" value="F:structural constituent of ribosome"/>
    <property type="evidence" value="ECO:0007669"/>
    <property type="project" value="InterPro"/>
</dbReference>
<dbReference type="GO" id="GO:0006412">
    <property type="term" value="P:translation"/>
    <property type="evidence" value="ECO:0007669"/>
    <property type="project" value="UniProtKB-UniRule"/>
</dbReference>
<dbReference type="CDD" id="cd00364">
    <property type="entry name" value="Ribosomal_uS17"/>
    <property type="match status" value="1"/>
</dbReference>
<dbReference type="FunFam" id="2.40.50.1000:FF:000005">
    <property type="entry name" value="30S ribosomal protein S17"/>
    <property type="match status" value="1"/>
</dbReference>
<dbReference type="Gene3D" id="2.40.50.1000">
    <property type="match status" value="1"/>
</dbReference>
<dbReference type="HAMAP" id="MF_01345_A">
    <property type="entry name" value="Ribosomal_uS17_A"/>
    <property type="match status" value="1"/>
</dbReference>
<dbReference type="InterPro" id="IPR012340">
    <property type="entry name" value="NA-bd_OB-fold"/>
</dbReference>
<dbReference type="InterPro" id="IPR000266">
    <property type="entry name" value="Ribosomal_uS17"/>
</dbReference>
<dbReference type="InterPro" id="IPR028333">
    <property type="entry name" value="Ribosomal_uS17_arc/euk"/>
</dbReference>
<dbReference type="InterPro" id="IPR019978">
    <property type="entry name" value="Ribosomal_uS17_archaeal"/>
</dbReference>
<dbReference type="InterPro" id="IPR019979">
    <property type="entry name" value="Ribosomal_uS17_CS"/>
</dbReference>
<dbReference type="NCBIfam" id="NF006345">
    <property type="entry name" value="PRK08572.1"/>
    <property type="match status" value="1"/>
</dbReference>
<dbReference type="NCBIfam" id="TIGR03630">
    <property type="entry name" value="uS17_arch"/>
    <property type="match status" value="1"/>
</dbReference>
<dbReference type="PANTHER" id="PTHR10744">
    <property type="entry name" value="40S RIBOSOMAL PROTEIN S11 FAMILY MEMBER"/>
    <property type="match status" value="1"/>
</dbReference>
<dbReference type="PANTHER" id="PTHR10744:SF9">
    <property type="entry name" value="40S RIBOSOMAL PROTEIN S11-RELATED"/>
    <property type="match status" value="1"/>
</dbReference>
<dbReference type="Pfam" id="PF00366">
    <property type="entry name" value="Ribosomal_S17"/>
    <property type="match status" value="1"/>
</dbReference>
<dbReference type="PRINTS" id="PR00973">
    <property type="entry name" value="RIBOSOMALS17"/>
</dbReference>
<dbReference type="SUPFAM" id="SSF50249">
    <property type="entry name" value="Nucleic acid-binding proteins"/>
    <property type="match status" value="1"/>
</dbReference>
<dbReference type="PROSITE" id="PS00056">
    <property type="entry name" value="RIBOSOMAL_S17"/>
    <property type="match status" value="1"/>
</dbReference>
<feature type="chain" id="PRO_0000232611" description="Small ribosomal subunit protein uS17">
    <location>
        <begin position="1"/>
        <end position="109"/>
    </location>
</feature>
<proteinExistence type="inferred from homology"/>
<accession>Q8PV41</accession>
<comment type="function">
    <text evidence="1">One of the primary rRNA binding proteins, it binds specifically to the 5'-end of 16S ribosomal RNA.</text>
</comment>
<comment type="subunit">
    <text evidence="1">Part of the 30S ribosomal subunit.</text>
</comment>
<comment type="similarity">
    <text evidence="1">Belongs to the universal ribosomal protein uS17 family.</text>
</comment>
<comment type="sequence caution" evidence="2">
    <conflict type="erroneous initiation">
        <sequence resource="EMBL-CDS" id="AAM31829"/>
    </conflict>
    <text>Extended N-terminus.</text>
</comment>
<name>RS17_METMA</name>
<sequence>MARDIGLNIPAPSEECDDAYCPFHGTLPVRGQILVGTVVSSKMDNTVVIERQYMKMVSKYQRYEKRRSKIHAHNPACISAKVGDIVTIVECRPISKTKSFVVVKAEVPK</sequence>
<protein>
    <recommendedName>
        <fullName evidence="1">Small ribosomal subunit protein uS17</fullName>
    </recommendedName>
    <alternativeName>
        <fullName evidence="2">30S ribosomal protein S17</fullName>
    </alternativeName>
</protein>
<gene>
    <name evidence="1" type="primary">rps17</name>
    <name type="ordered locus">MM_2133</name>
</gene>
<organism>
    <name type="scientific">Methanosarcina mazei (strain ATCC BAA-159 / DSM 3647 / Goe1 / Go1 / JCM 11833 / OCM 88)</name>
    <name type="common">Methanosarcina frisia</name>
    <dbReference type="NCBI Taxonomy" id="192952"/>
    <lineage>
        <taxon>Archaea</taxon>
        <taxon>Methanobacteriati</taxon>
        <taxon>Methanobacteriota</taxon>
        <taxon>Stenosarchaea group</taxon>
        <taxon>Methanomicrobia</taxon>
        <taxon>Methanosarcinales</taxon>
        <taxon>Methanosarcinaceae</taxon>
        <taxon>Methanosarcina</taxon>
    </lineage>
</organism>
<reference key="1">
    <citation type="journal article" date="2002" name="J. Mol. Microbiol. Biotechnol.">
        <title>The genome of Methanosarcina mazei: evidence for lateral gene transfer between Bacteria and Archaea.</title>
        <authorList>
            <person name="Deppenmeier U."/>
            <person name="Johann A."/>
            <person name="Hartsch T."/>
            <person name="Merkl R."/>
            <person name="Schmitz R.A."/>
            <person name="Martinez-Arias R."/>
            <person name="Henne A."/>
            <person name="Wiezer A."/>
            <person name="Baeumer S."/>
            <person name="Jacobi C."/>
            <person name="Brueggemann H."/>
            <person name="Lienard T."/>
            <person name="Christmann A."/>
            <person name="Boemecke M."/>
            <person name="Steckel S."/>
            <person name="Bhattacharyya A."/>
            <person name="Lykidis A."/>
            <person name="Overbeek R."/>
            <person name="Klenk H.-P."/>
            <person name="Gunsalus R.P."/>
            <person name="Fritz H.-J."/>
            <person name="Gottschalk G."/>
        </authorList>
    </citation>
    <scope>NUCLEOTIDE SEQUENCE [LARGE SCALE GENOMIC DNA]</scope>
    <source>
        <strain>ATCC BAA-159 / DSM 3647 / Goe1 / Go1 / JCM 11833 / OCM 88</strain>
    </source>
</reference>
<keyword id="KW-0687">Ribonucleoprotein</keyword>
<keyword id="KW-0689">Ribosomal protein</keyword>
<keyword id="KW-0694">RNA-binding</keyword>
<keyword id="KW-0699">rRNA-binding</keyword>